<keyword id="KW-0007">Acetylation</keyword>
<keyword id="KW-0963">Cytoplasm</keyword>
<keyword id="KW-0251">Elongation factor</keyword>
<keyword id="KW-0342">GTP-binding</keyword>
<keyword id="KW-0547">Nucleotide-binding</keyword>
<keyword id="KW-0648">Protein biosynthesis</keyword>
<proteinExistence type="inferred from homology"/>
<feature type="chain" id="PRO_1000201463" description="Elongation factor G">
    <location>
        <begin position="1"/>
        <end position="704"/>
    </location>
</feature>
<feature type="domain" description="tr-type G">
    <location>
        <begin position="8"/>
        <end position="290"/>
    </location>
</feature>
<feature type="binding site" evidence="2">
    <location>
        <begin position="17"/>
        <end position="24"/>
    </location>
    <ligand>
        <name>GTP</name>
        <dbReference type="ChEBI" id="CHEBI:37565"/>
    </ligand>
</feature>
<feature type="binding site" evidence="2">
    <location>
        <begin position="88"/>
        <end position="92"/>
    </location>
    <ligand>
        <name>GTP</name>
        <dbReference type="ChEBI" id="CHEBI:37565"/>
    </ligand>
</feature>
<feature type="binding site" evidence="2">
    <location>
        <begin position="142"/>
        <end position="145"/>
    </location>
    <ligand>
        <name>GTP</name>
        <dbReference type="ChEBI" id="CHEBI:37565"/>
    </ligand>
</feature>
<feature type="modified residue" description="N6-acetyllysine" evidence="1">
    <location>
        <position position="504"/>
    </location>
</feature>
<feature type="modified residue" description="N6-acetyllysine" evidence="1">
    <location>
        <position position="643"/>
    </location>
</feature>
<evidence type="ECO:0000250" key="1"/>
<evidence type="ECO:0000255" key="2">
    <source>
        <dbReference type="HAMAP-Rule" id="MF_00054"/>
    </source>
</evidence>
<protein>
    <recommendedName>
        <fullName evidence="2">Elongation factor G</fullName>
        <shortName evidence="2">EF-G</shortName>
    </recommendedName>
</protein>
<accession>B7M1P1</accession>
<sequence>MARTTPIARYRNIGISAHIDAGKTTTTERILFYTGVNHKIGEVHDGAATMDWMEQEQERGITITSAATTAFWSGMAKQYEPHRINIIDTPGHVDFTIEVERSMRVLDGAVMVYCAVGGVQPQSETVWRQANKYKVPRIAFVNKMDRMGANFLKVVNQIKTRLGANPVPLQLAIGAEEHFTGVVDLVKMKAINWNDADQGVTFEYEDIPADMVELANEWHQNLIESAAEASEELMEKYLGGEELTEAEIKGALRQRVLNNEIILVTCGSAFKNKGVQAMLDAVIDYLPSPVDVPAINGILDDGKDTPAERHASDDEPFSALAFKIATDPFVGNLTFFRVYSGVVNSGDTVLNSVKAARERFGRIVQMHANKREEIKEVRAGDIAAAIGLKDVTTGDTLCDPDAPIILERMEFPEPVISIAVEPKTKADQEKMGLALGRLAKEDPSFRVWTDEESNQTIIAGMGELHLDIIVDRMKREFNVEANVGKPQVAYRETIRQKVTDVEGKHAKQSGGRGQYGHVVIDMYPLEPGSNPKGYEFINDIKGGVIPGEYIPAVDKGIQEQLKAGPLAGYPVVDMGIRLHFGSYHDVDSSELAFKLAASIAFKEGFKKAKPVLLEPIMKVEVETPEENTGDVIGDLSRRRGMLKGQESEVTGVKIHAEVPLSEMFGYATQLRSLTKGRASYTMEFLKYDEAPSNVAQAVIEARGK</sequence>
<dbReference type="EMBL" id="CU928160">
    <property type="protein sequence ID" value="CAR00278.1"/>
    <property type="molecule type" value="Genomic_DNA"/>
</dbReference>
<dbReference type="RefSeq" id="WP_000124700.1">
    <property type="nucleotide sequence ID" value="NC_011741.1"/>
</dbReference>
<dbReference type="SMR" id="B7M1P1"/>
<dbReference type="GeneID" id="93778658"/>
<dbReference type="KEGG" id="ecr:ECIAI1_3476"/>
<dbReference type="HOGENOM" id="CLU_002794_4_1_6"/>
<dbReference type="GO" id="GO:0005737">
    <property type="term" value="C:cytoplasm"/>
    <property type="evidence" value="ECO:0007669"/>
    <property type="project" value="UniProtKB-SubCell"/>
</dbReference>
<dbReference type="GO" id="GO:0005525">
    <property type="term" value="F:GTP binding"/>
    <property type="evidence" value="ECO:0007669"/>
    <property type="project" value="UniProtKB-UniRule"/>
</dbReference>
<dbReference type="GO" id="GO:0003924">
    <property type="term" value="F:GTPase activity"/>
    <property type="evidence" value="ECO:0007669"/>
    <property type="project" value="InterPro"/>
</dbReference>
<dbReference type="GO" id="GO:0097216">
    <property type="term" value="F:guanosine tetraphosphate binding"/>
    <property type="evidence" value="ECO:0007669"/>
    <property type="project" value="UniProtKB-ARBA"/>
</dbReference>
<dbReference type="GO" id="GO:0003746">
    <property type="term" value="F:translation elongation factor activity"/>
    <property type="evidence" value="ECO:0007669"/>
    <property type="project" value="UniProtKB-UniRule"/>
</dbReference>
<dbReference type="GO" id="GO:0032790">
    <property type="term" value="P:ribosome disassembly"/>
    <property type="evidence" value="ECO:0007669"/>
    <property type="project" value="TreeGrafter"/>
</dbReference>
<dbReference type="CDD" id="cd01886">
    <property type="entry name" value="EF-G"/>
    <property type="match status" value="1"/>
</dbReference>
<dbReference type="CDD" id="cd16262">
    <property type="entry name" value="EFG_III"/>
    <property type="match status" value="1"/>
</dbReference>
<dbReference type="CDD" id="cd01434">
    <property type="entry name" value="EFG_mtEFG1_IV"/>
    <property type="match status" value="1"/>
</dbReference>
<dbReference type="CDD" id="cd03713">
    <property type="entry name" value="EFG_mtEFG_C"/>
    <property type="match status" value="1"/>
</dbReference>
<dbReference type="CDD" id="cd04088">
    <property type="entry name" value="EFG_mtEFG_II"/>
    <property type="match status" value="1"/>
</dbReference>
<dbReference type="FunFam" id="2.40.30.10:FF:000006">
    <property type="entry name" value="Elongation factor G"/>
    <property type="match status" value="1"/>
</dbReference>
<dbReference type="FunFam" id="3.30.230.10:FF:000003">
    <property type="entry name" value="Elongation factor G"/>
    <property type="match status" value="1"/>
</dbReference>
<dbReference type="FunFam" id="3.30.70.240:FF:000001">
    <property type="entry name" value="Elongation factor G"/>
    <property type="match status" value="1"/>
</dbReference>
<dbReference type="FunFam" id="3.30.70.870:FF:000001">
    <property type="entry name" value="Elongation factor G"/>
    <property type="match status" value="1"/>
</dbReference>
<dbReference type="FunFam" id="3.40.50.300:FF:000029">
    <property type="entry name" value="Elongation factor G"/>
    <property type="match status" value="1"/>
</dbReference>
<dbReference type="Gene3D" id="3.30.230.10">
    <property type="match status" value="1"/>
</dbReference>
<dbReference type="Gene3D" id="3.30.70.240">
    <property type="match status" value="1"/>
</dbReference>
<dbReference type="Gene3D" id="3.30.70.870">
    <property type="entry name" value="Elongation Factor G (Translational Gtpase), domain 3"/>
    <property type="match status" value="1"/>
</dbReference>
<dbReference type="Gene3D" id="3.40.50.300">
    <property type="entry name" value="P-loop containing nucleotide triphosphate hydrolases"/>
    <property type="match status" value="1"/>
</dbReference>
<dbReference type="Gene3D" id="2.40.30.10">
    <property type="entry name" value="Translation factors"/>
    <property type="match status" value="1"/>
</dbReference>
<dbReference type="HAMAP" id="MF_00054_B">
    <property type="entry name" value="EF_G_EF_2_B"/>
    <property type="match status" value="1"/>
</dbReference>
<dbReference type="InterPro" id="IPR041095">
    <property type="entry name" value="EFG_II"/>
</dbReference>
<dbReference type="InterPro" id="IPR009022">
    <property type="entry name" value="EFG_III"/>
</dbReference>
<dbReference type="InterPro" id="IPR035647">
    <property type="entry name" value="EFG_III/V"/>
</dbReference>
<dbReference type="InterPro" id="IPR047872">
    <property type="entry name" value="EFG_IV"/>
</dbReference>
<dbReference type="InterPro" id="IPR035649">
    <property type="entry name" value="EFG_V"/>
</dbReference>
<dbReference type="InterPro" id="IPR000640">
    <property type="entry name" value="EFG_V-like"/>
</dbReference>
<dbReference type="InterPro" id="IPR004161">
    <property type="entry name" value="EFTu-like_2"/>
</dbReference>
<dbReference type="InterPro" id="IPR031157">
    <property type="entry name" value="G_TR_CS"/>
</dbReference>
<dbReference type="InterPro" id="IPR027417">
    <property type="entry name" value="P-loop_NTPase"/>
</dbReference>
<dbReference type="InterPro" id="IPR020568">
    <property type="entry name" value="Ribosomal_Su5_D2-typ_SF"/>
</dbReference>
<dbReference type="InterPro" id="IPR014721">
    <property type="entry name" value="Ribsml_uS5_D2-typ_fold_subgr"/>
</dbReference>
<dbReference type="InterPro" id="IPR005225">
    <property type="entry name" value="Small_GTP-bd"/>
</dbReference>
<dbReference type="InterPro" id="IPR000795">
    <property type="entry name" value="T_Tr_GTP-bd_dom"/>
</dbReference>
<dbReference type="InterPro" id="IPR009000">
    <property type="entry name" value="Transl_B-barrel_sf"/>
</dbReference>
<dbReference type="InterPro" id="IPR004540">
    <property type="entry name" value="Transl_elong_EFG/EF2"/>
</dbReference>
<dbReference type="InterPro" id="IPR005517">
    <property type="entry name" value="Transl_elong_EFG/EF2_IV"/>
</dbReference>
<dbReference type="NCBIfam" id="TIGR00484">
    <property type="entry name" value="EF-G"/>
    <property type="match status" value="1"/>
</dbReference>
<dbReference type="NCBIfam" id="NF009381">
    <property type="entry name" value="PRK12740.1-5"/>
    <property type="match status" value="1"/>
</dbReference>
<dbReference type="NCBIfam" id="TIGR00231">
    <property type="entry name" value="small_GTP"/>
    <property type="match status" value="1"/>
</dbReference>
<dbReference type="PANTHER" id="PTHR43261:SF1">
    <property type="entry name" value="RIBOSOME-RELEASING FACTOR 2, MITOCHONDRIAL"/>
    <property type="match status" value="1"/>
</dbReference>
<dbReference type="PANTHER" id="PTHR43261">
    <property type="entry name" value="TRANSLATION ELONGATION FACTOR G-RELATED"/>
    <property type="match status" value="1"/>
</dbReference>
<dbReference type="Pfam" id="PF00679">
    <property type="entry name" value="EFG_C"/>
    <property type="match status" value="1"/>
</dbReference>
<dbReference type="Pfam" id="PF14492">
    <property type="entry name" value="EFG_III"/>
    <property type="match status" value="1"/>
</dbReference>
<dbReference type="Pfam" id="PF03764">
    <property type="entry name" value="EFG_IV"/>
    <property type="match status" value="1"/>
</dbReference>
<dbReference type="Pfam" id="PF00009">
    <property type="entry name" value="GTP_EFTU"/>
    <property type="match status" value="1"/>
</dbReference>
<dbReference type="Pfam" id="PF03144">
    <property type="entry name" value="GTP_EFTU_D2"/>
    <property type="match status" value="1"/>
</dbReference>
<dbReference type="PRINTS" id="PR00315">
    <property type="entry name" value="ELONGATNFCT"/>
</dbReference>
<dbReference type="SMART" id="SM00838">
    <property type="entry name" value="EFG_C"/>
    <property type="match status" value="1"/>
</dbReference>
<dbReference type="SMART" id="SM00889">
    <property type="entry name" value="EFG_IV"/>
    <property type="match status" value="1"/>
</dbReference>
<dbReference type="SUPFAM" id="SSF54980">
    <property type="entry name" value="EF-G C-terminal domain-like"/>
    <property type="match status" value="2"/>
</dbReference>
<dbReference type="SUPFAM" id="SSF52540">
    <property type="entry name" value="P-loop containing nucleoside triphosphate hydrolases"/>
    <property type="match status" value="1"/>
</dbReference>
<dbReference type="SUPFAM" id="SSF54211">
    <property type="entry name" value="Ribosomal protein S5 domain 2-like"/>
    <property type="match status" value="1"/>
</dbReference>
<dbReference type="SUPFAM" id="SSF50447">
    <property type="entry name" value="Translation proteins"/>
    <property type="match status" value="1"/>
</dbReference>
<dbReference type="PROSITE" id="PS00301">
    <property type="entry name" value="G_TR_1"/>
    <property type="match status" value="1"/>
</dbReference>
<dbReference type="PROSITE" id="PS51722">
    <property type="entry name" value="G_TR_2"/>
    <property type="match status" value="1"/>
</dbReference>
<reference key="1">
    <citation type="journal article" date="2009" name="PLoS Genet.">
        <title>Organised genome dynamics in the Escherichia coli species results in highly diverse adaptive paths.</title>
        <authorList>
            <person name="Touchon M."/>
            <person name="Hoede C."/>
            <person name="Tenaillon O."/>
            <person name="Barbe V."/>
            <person name="Baeriswyl S."/>
            <person name="Bidet P."/>
            <person name="Bingen E."/>
            <person name="Bonacorsi S."/>
            <person name="Bouchier C."/>
            <person name="Bouvet O."/>
            <person name="Calteau A."/>
            <person name="Chiapello H."/>
            <person name="Clermont O."/>
            <person name="Cruveiller S."/>
            <person name="Danchin A."/>
            <person name="Diard M."/>
            <person name="Dossat C."/>
            <person name="Karoui M.E."/>
            <person name="Frapy E."/>
            <person name="Garry L."/>
            <person name="Ghigo J.M."/>
            <person name="Gilles A.M."/>
            <person name="Johnson J."/>
            <person name="Le Bouguenec C."/>
            <person name="Lescat M."/>
            <person name="Mangenot S."/>
            <person name="Martinez-Jehanne V."/>
            <person name="Matic I."/>
            <person name="Nassif X."/>
            <person name="Oztas S."/>
            <person name="Petit M.A."/>
            <person name="Pichon C."/>
            <person name="Rouy Z."/>
            <person name="Ruf C.S."/>
            <person name="Schneider D."/>
            <person name="Tourret J."/>
            <person name="Vacherie B."/>
            <person name="Vallenet D."/>
            <person name="Medigue C."/>
            <person name="Rocha E.P.C."/>
            <person name="Denamur E."/>
        </authorList>
    </citation>
    <scope>NUCLEOTIDE SEQUENCE [LARGE SCALE GENOMIC DNA]</scope>
    <source>
        <strain>IAI1</strain>
    </source>
</reference>
<organism>
    <name type="scientific">Escherichia coli O8 (strain IAI1)</name>
    <dbReference type="NCBI Taxonomy" id="585034"/>
    <lineage>
        <taxon>Bacteria</taxon>
        <taxon>Pseudomonadati</taxon>
        <taxon>Pseudomonadota</taxon>
        <taxon>Gammaproteobacteria</taxon>
        <taxon>Enterobacterales</taxon>
        <taxon>Enterobacteriaceae</taxon>
        <taxon>Escherichia</taxon>
    </lineage>
</organism>
<gene>
    <name evidence="2" type="primary">fusA</name>
    <name type="ordered locus">ECIAI1_3476</name>
</gene>
<comment type="function">
    <text evidence="2">Catalyzes the GTP-dependent ribosomal translocation step during translation elongation. During this step, the ribosome changes from the pre-translocational (PRE) to the post-translocational (POST) state as the newly formed A-site-bound peptidyl-tRNA and P-site-bound deacylated tRNA move to the P and E sites, respectively. Catalyzes the coordinated movement of the two tRNA molecules, the mRNA and conformational changes in the ribosome.</text>
</comment>
<comment type="subcellular location">
    <subcellularLocation>
        <location evidence="2">Cytoplasm</location>
    </subcellularLocation>
</comment>
<comment type="similarity">
    <text evidence="2">Belongs to the TRAFAC class translation factor GTPase superfamily. Classic translation factor GTPase family. EF-G/EF-2 subfamily.</text>
</comment>
<name>EFG_ECO8A</name>